<accession>A2RRU1</accession>
<sequence>MPLSRSLSMSSLPGLEDWEDEFDPENAVLFEVAWEVANKVGGIYTVLQTKAKVTGDEWGDNYYLVGPYTEQGVRTQVELLEPPTPELKRTLDSMNSKGCKVYFGRWLIEGGPLVVLLDVGASAWALERWKGELWDTCNIGVPWYDREANDAVLFGFLTTWFLGEFLAQNEEKPYVVAHFHEWLAGVGLCLCRARRLPVATIFTTHATLLGRYLCAGAVDFYNNLENFNVDKEAGERQIYHRYCMERAAAHCAHVFTTVSQITAIEAQHLLKRKPDIVTPNGLNVKKFSAMHEFQNLHAQSKARIQEFVRGHFYGHLDFNLDKTLYFFIAGRYEFSNKGADIFLEALARLNYLLRVNGSEQTVVAFFIMPARTNNFNVETLKGQAVRKQLWDTANTVKEKFGRKLYESLLVGSLPDMNKMLDKEDFTMMKRAIFATQRQSFPPVCTHNMLDDSSDPILTTIRRIGLFNSSADRVKVIFHPEFLSSTSPLLPVDYEEFVRGCHLGVFPSYYEPWGYTPAECTVMGIPSISTNLSGFGCFMEEHIADPSAYGIYILDRRFRSLDDSCSQLTSFLYSFCQQSRRQRIIQRNRTERLSDLLDWKYLGRYYMSARHMALAKAFPDHFTYEPHEVDATQGYRYPRPASVPPSPSLSRHSSPHQSEDEEEPRDGPLREDSERYDEEEEAAKDRRNIRAPEWPRRASCSSSTGGSKRSNSVDTGPSSSLSTPTEPLSPTSSLGEERN</sequence>
<protein>
    <recommendedName>
        <fullName>Glycogen [starch] synthase, muscle</fullName>
        <ecNumber evidence="2">2.4.1.11</ecNumber>
    </recommendedName>
    <alternativeName>
        <fullName evidence="2">Glycogen synthase 1</fullName>
    </alternativeName>
</protein>
<feature type="chain" id="PRO_0000366920" description="Glycogen [starch] synthase, muscle">
    <location>
        <begin position="1"/>
        <end position="738"/>
    </location>
</feature>
<feature type="region of interest" description="Disordered" evidence="6">
    <location>
        <begin position="632"/>
        <end position="738"/>
    </location>
</feature>
<feature type="compositionally biased region" description="Basic and acidic residues" evidence="6">
    <location>
        <begin position="682"/>
        <end position="695"/>
    </location>
</feature>
<feature type="compositionally biased region" description="Low complexity" evidence="6">
    <location>
        <begin position="698"/>
        <end position="738"/>
    </location>
</feature>
<feature type="binding site" evidence="2">
    <location>
        <position position="39"/>
    </location>
    <ligand>
        <name>UDP</name>
        <dbReference type="ChEBI" id="CHEBI:58223"/>
    </ligand>
</feature>
<feature type="binding site" evidence="2">
    <location>
        <position position="205"/>
    </location>
    <ligand>
        <name>UDP-alpha-D-glucose</name>
        <dbReference type="ChEBI" id="CHEBI:58885"/>
    </ligand>
</feature>
<feature type="binding site" evidence="2">
    <location>
        <position position="211"/>
    </location>
    <ligand>
        <name>UDP-alpha-D-glucose</name>
        <dbReference type="ChEBI" id="CHEBI:58885"/>
    </ligand>
</feature>
<feature type="binding site" description="in other chain" evidence="2">
    <location>
        <position position="291"/>
    </location>
    <ligand>
        <name>alpha-D-glucose 6-phosphate</name>
        <dbReference type="ChEBI" id="CHEBI:58225"/>
        <note>allosteric activator; ligand shared between two neighboring subunits</note>
    </ligand>
</feature>
<feature type="binding site" description="in other chain" evidence="2">
    <location>
        <position position="292"/>
    </location>
    <ligand>
        <name>alpha-D-glucose 6-phosphate</name>
        <dbReference type="ChEBI" id="CHEBI:58225"/>
        <note>allosteric activator; ligand shared between two neighboring subunits</note>
    </ligand>
</feature>
<feature type="binding site" evidence="2">
    <location>
        <position position="294"/>
    </location>
    <ligand>
        <name>alpha-D-glucose 6-phosphate</name>
        <dbReference type="ChEBI" id="CHEBI:58225"/>
        <note>allosteric activator; ligand shared between two neighboring subunits</note>
    </ligand>
</feature>
<feature type="binding site" evidence="2">
    <location>
        <position position="297"/>
    </location>
    <ligand>
        <name>alpha-D-glucose 6-phosphate</name>
        <dbReference type="ChEBI" id="CHEBI:58225"/>
        <note>allosteric activator; ligand shared between two neighboring subunits</note>
    </ligand>
</feature>
<feature type="binding site" evidence="2">
    <location>
        <position position="301"/>
    </location>
    <ligand>
        <name>alpha-D-glucose 6-phosphate</name>
        <dbReference type="ChEBI" id="CHEBI:58225"/>
        <note>allosteric activator; ligand shared between two neighboring subunits</note>
    </ligand>
</feature>
<feature type="binding site" evidence="2">
    <location>
        <position position="331"/>
    </location>
    <ligand>
        <name>UDP</name>
        <dbReference type="ChEBI" id="CHEBI:58223"/>
    </ligand>
</feature>
<feature type="binding site" evidence="2">
    <location>
        <position position="331"/>
    </location>
    <ligand>
        <name>UDP-alpha-D-glucose</name>
        <dbReference type="ChEBI" id="CHEBI:58885"/>
    </ligand>
</feature>
<feature type="binding site" evidence="2">
    <location>
        <position position="501"/>
    </location>
    <ligand>
        <name>alpha-D-glucose 6-phosphate</name>
        <dbReference type="ChEBI" id="CHEBI:58225"/>
        <note>allosteric activator; ligand shared between two neighboring subunits</note>
    </ligand>
</feature>
<feature type="binding site" evidence="2">
    <location>
        <position position="510"/>
    </location>
    <ligand>
        <name>UDP-alpha-D-glucose</name>
        <dbReference type="ChEBI" id="CHEBI:58885"/>
    </ligand>
</feature>
<feature type="binding site" evidence="2">
    <location>
        <position position="512"/>
    </location>
    <ligand>
        <name>UDP-alpha-D-glucose</name>
        <dbReference type="ChEBI" id="CHEBI:58885"/>
    </ligand>
</feature>
<feature type="binding site" evidence="2">
    <location>
        <position position="513"/>
    </location>
    <ligand>
        <name>UDP-alpha-D-glucose</name>
        <dbReference type="ChEBI" id="CHEBI:58885"/>
    </ligand>
</feature>
<feature type="binding site" evidence="2">
    <location>
        <position position="515"/>
    </location>
    <ligand>
        <name>UDP</name>
        <dbReference type="ChEBI" id="CHEBI:58223"/>
    </ligand>
</feature>
<feature type="binding site" evidence="2">
    <location>
        <position position="582"/>
    </location>
    <ligand>
        <name>alpha-D-glucose 6-phosphate</name>
        <dbReference type="ChEBI" id="CHEBI:58225"/>
        <note>allosteric activator; ligand shared between two neighboring subunits</note>
    </ligand>
</feature>
<feature type="binding site" evidence="2">
    <location>
        <position position="586"/>
    </location>
    <ligand>
        <name>alpha-D-glucose 6-phosphate</name>
        <dbReference type="ChEBI" id="CHEBI:58225"/>
        <note>allosteric activator; ligand shared between two neighboring subunits</note>
    </ligand>
</feature>
<feature type="modified residue" description="Phosphoserine; by AMPK and PKA" evidence="5">
    <location>
        <position position="8"/>
    </location>
</feature>
<feature type="modified residue" description="Phosphoserine" evidence="3">
    <location>
        <position position="11"/>
    </location>
</feature>
<feature type="modified residue" description="Phosphoserine" evidence="8">
    <location>
        <position position="412"/>
    </location>
</feature>
<feature type="modified residue" description="Phosphoserine" evidence="8">
    <location>
        <position position="641"/>
    </location>
</feature>
<feature type="modified residue" description="Phosphoserine" evidence="8">
    <location>
        <position position="645"/>
    </location>
</feature>
<feature type="modified residue" description="Phosphoserine; by GSK3-alpha and GSK3-beta" evidence="3">
    <location>
        <position position="649"/>
    </location>
</feature>
<feature type="modified residue" description="Phosphoserine" evidence="8">
    <location>
        <position position="652"/>
    </location>
</feature>
<feature type="modified residue" description="Phosphoserine" evidence="8">
    <location>
        <position position="653"/>
    </location>
</feature>
<feature type="modified residue" description="Phosphoserine" evidence="8">
    <location>
        <position position="657"/>
    </location>
</feature>
<feature type="modified residue" description="Phosphoserine" evidence="8">
    <location>
        <position position="672"/>
    </location>
</feature>
<feature type="modified residue" description="Phosphoserine" evidence="3">
    <location>
        <position position="698"/>
    </location>
</feature>
<feature type="modified residue" description="Phosphoserine" evidence="5">
    <location>
        <position position="709"/>
    </location>
</feature>
<feature type="modified residue" description="Phosphoserine" evidence="2">
    <location>
        <position position="711"/>
    </location>
</feature>
<feature type="modified residue" description="Phosphothreonine" evidence="8">
    <location>
        <position position="722"/>
    </location>
</feature>
<feature type="modified residue" description="Phosphoserine" evidence="2">
    <location>
        <position position="728"/>
    </location>
</feature>
<feature type="modified residue" description="Phosphoserine" evidence="2">
    <location>
        <position position="732"/>
    </location>
</feature>
<gene>
    <name type="primary">Gys1</name>
</gene>
<evidence type="ECO:0000250" key="1"/>
<evidence type="ECO:0000250" key="2">
    <source>
        <dbReference type="UniProtKB" id="P13807"/>
    </source>
</evidence>
<evidence type="ECO:0000250" key="3">
    <source>
        <dbReference type="UniProtKB" id="P13834"/>
    </source>
</evidence>
<evidence type="ECO:0000250" key="4">
    <source>
        <dbReference type="UniProtKB" id="P54840"/>
    </source>
</evidence>
<evidence type="ECO:0000250" key="5">
    <source>
        <dbReference type="UniProtKB" id="Q9Z1E4"/>
    </source>
</evidence>
<evidence type="ECO:0000256" key="6">
    <source>
        <dbReference type="SAM" id="MobiDB-lite"/>
    </source>
</evidence>
<evidence type="ECO:0000305" key="7"/>
<evidence type="ECO:0007744" key="8">
    <source>
    </source>
</evidence>
<comment type="function">
    <text evidence="2">Glycogen synthase participates in the glycogen biosynthetic process along with glycogenin and glycogen branching enzyme. Extends the primer composed of a few glucose units formed by glycogenin by adding new glucose units to it. In this context, glycogen synthase transfers the glycosyl residue from UDP-Glc to the non-reducing end of alpha-1,4-glucan.</text>
</comment>
<comment type="catalytic activity">
    <reaction evidence="2">
        <text>[(1-&gt;4)-alpha-D-glucosyl](n) + UDP-alpha-D-glucose = [(1-&gt;4)-alpha-D-glucosyl](n+1) + UDP + H(+)</text>
        <dbReference type="Rhea" id="RHEA:18549"/>
        <dbReference type="Rhea" id="RHEA-COMP:9584"/>
        <dbReference type="Rhea" id="RHEA-COMP:9587"/>
        <dbReference type="ChEBI" id="CHEBI:15378"/>
        <dbReference type="ChEBI" id="CHEBI:15444"/>
        <dbReference type="ChEBI" id="CHEBI:58223"/>
        <dbReference type="ChEBI" id="CHEBI:58885"/>
        <dbReference type="EC" id="2.4.1.11"/>
    </reaction>
    <physiologicalReaction direction="left-to-right" evidence="2">
        <dbReference type="Rhea" id="RHEA:18550"/>
    </physiologicalReaction>
</comment>
<comment type="activity regulation">
    <text evidence="3 4">Allosteric activation by glucose-6-phosphate. Phosphorylation reduces the activity towards UDP-glucose. When in the non-phosphorylated state, glycogen synthase does not require glucose-6-phosphate as an allosteric activator; when phosphorylated it does (By similarity).</text>
</comment>
<comment type="pathway">
    <text evidence="2">Glycan biosynthesis; glycogen biosynthesis.</text>
</comment>
<comment type="subunit">
    <text evidence="2">Part of the GYS1-GYG1 complex, a heterooctamer composed of a tetramer of GYS1 and 2 dimers of GYG1, where each GYS1 protomer binds to one GYG1 subunit (via GYG1 C-terminus); the GYS1 tetramer may dissociate from GYG1 dimers to continue glycogen polymerization on its own.</text>
</comment>
<comment type="PTM">
    <text evidence="1">Phosphorylation at Ser-8 by AMPK inactivates the enzyme activity. Primed phosphorylation at Ser-657 (site 5) by CSNK2A1 and CSNK2A2 is required for inhibitory phosphorylation at Ser-641 (site 3a), Ser-645 (site 3b), Ser-649 (site 3c) and Ser-653 (site 4) by GSK3A an GSK3B. Phosphorylated at Ser-641 by PASK, leading to inactivation; phosphorylation by PASK is inhibited by glycogen. Phosphorylated at Ser-641 by DYRK2, leading to inactivation. Dephosphorylation at Ser-641 and Ser-645 by PP1 activates the enzyme (By similarity).</text>
</comment>
<comment type="similarity">
    <text evidence="7">Belongs to the glycosyltransferase 3 family.</text>
</comment>
<proteinExistence type="evidence at protein level"/>
<name>GYS1_RAT</name>
<dbReference type="EC" id="2.4.1.11" evidence="2"/>
<dbReference type="EMBL" id="BC131849">
    <property type="protein sequence ID" value="AAI31850.1"/>
    <property type="molecule type" value="mRNA"/>
</dbReference>
<dbReference type="RefSeq" id="NP_001103085.1">
    <property type="nucleotide sequence ID" value="NM_001109615.1"/>
</dbReference>
<dbReference type="SMR" id="A2RRU1"/>
<dbReference type="BioGRID" id="605796">
    <property type="interactions" value="3"/>
</dbReference>
<dbReference type="FunCoup" id="A2RRU1">
    <property type="interactions" value="2055"/>
</dbReference>
<dbReference type="IntAct" id="A2RRU1">
    <property type="interactions" value="2"/>
</dbReference>
<dbReference type="STRING" id="10116.ENSRNOP00000028271"/>
<dbReference type="ChEMBL" id="CHEMBL4523104"/>
<dbReference type="CAZy" id="GT3">
    <property type="family name" value="Glycosyltransferase Family 3"/>
</dbReference>
<dbReference type="iPTMnet" id="A2RRU1"/>
<dbReference type="PhosphoSitePlus" id="A2RRU1"/>
<dbReference type="SwissPalm" id="A2RRU1"/>
<dbReference type="jPOST" id="A2RRU1"/>
<dbReference type="PaxDb" id="10116-ENSRNOP00000028271"/>
<dbReference type="PeptideAtlas" id="A2RRU1"/>
<dbReference type="Ensembl" id="ENSRNOT00000028271.4">
    <property type="protein sequence ID" value="ENSRNOP00000028271.2"/>
    <property type="gene ID" value="ENSRNOG00000020812.4"/>
</dbReference>
<dbReference type="GeneID" id="690987"/>
<dbReference type="KEGG" id="rno:690987"/>
<dbReference type="UCSC" id="RGD:1589798">
    <property type="organism name" value="rat"/>
</dbReference>
<dbReference type="AGR" id="RGD:1589798"/>
<dbReference type="CTD" id="2997"/>
<dbReference type="RGD" id="1589798">
    <property type="gene designation" value="Gys1"/>
</dbReference>
<dbReference type="eggNOG" id="KOG3742">
    <property type="taxonomic scope" value="Eukaryota"/>
</dbReference>
<dbReference type="GeneTree" id="ENSGT00390000018612"/>
<dbReference type="HOGENOM" id="CLU_015910_1_0_1"/>
<dbReference type="InParanoid" id="A2RRU1"/>
<dbReference type="OMA" id="RDVRNHI"/>
<dbReference type="OrthoDB" id="6335297at2759"/>
<dbReference type="PhylomeDB" id="A2RRU1"/>
<dbReference type="TreeFam" id="TF300306"/>
<dbReference type="Reactome" id="R-RNO-3322077">
    <property type="pathway name" value="Glycogen synthesis"/>
</dbReference>
<dbReference type="UniPathway" id="UPA00164"/>
<dbReference type="PRO" id="PR:A2RRU1"/>
<dbReference type="Proteomes" id="UP000002494">
    <property type="component" value="Chromosome 1"/>
</dbReference>
<dbReference type="Bgee" id="ENSRNOG00000020812">
    <property type="expression patterns" value="Expressed in skeletal muscle tissue and 20 other cell types or tissues"/>
</dbReference>
<dbReference type="GO" id="GO:0005737">
    <property type="term" value="C:cytoplasm"/>
    <property type="evidence" value="ECO:0000266"/>
    <property type="project" value="RGD"/>
</dbReference>
<dbReference type="GO" id="GO:0005829">
    <property type="term" value="C:cytosol"/>
    <property type="evidence" value="ECO:0000266"/>
    <property type="project" value="RGD"/>
</dbReference>
<dbReference type="GO" id="GO:0016234">
    <property type="term" value="C:inclusion body"/>
    <property type="evidence" value="ECO:0000266"/>
    <property type="project" value="RGD"/>
</dbReference>
<dbReference type="GO" id="GO:0004373">
    <property type="term" value="F:alpha-1,4-glucan glucosyltransferase (UDP-glucose donor) activity"/>
    <property type="evidence" value="ECO:0000314"/>
    <property type="project" value="RGD"/>
</dbReference>
<dbReference type="GO" id="GO:0005536">
    <property type="term" value="F:D-glucose binding"/>
    <property type="evidence" value="ECO:0000314"/>
    <property type="project" value="RGD"/>
</dbReference>
<dbReference type="GO" id="GO:0061547">
    <property type="term" value="F:glycogen synthase activity, transferring glucose-1-phosphate"/>
    <property type="evidence" value="ECO:0000266"/>
    <property type="project" value="RGD"/>
</dbReference>
<dbReference type="GO" id="GO:0005978">
    <property type="term" value="P:glycogen biosynthetic process"/>
    <property type="evidence" value="ECO:0000314"/>
    <property type="project" value="RGD"/>
</dbReference>
<dbReference type="GO" id="GO:0005977">
    <property type="term" value="P:glycogen metabolic process"/>
    <property type="evidence" value="ECO:0000314"/>
    <property type="project" value="RGD"/>
</dbReference>
<dbReference type="GO" id="GO:0007507">
    <property type="term" value="P:heart development"/>
    <property type="evidence" value="ECO:0000266"/>
    <property type="project" value="RGD"/>
</dbReference>
<dbReference type="CDD" id="cd03793">
    <property type="entry name" value="GT3_GSY2-like"/>
    <property type="match status" value="1"/>
</dbReference>
<dbReference type="FunFam" id="3.40.50.2000:FF:000014">
    <property type="entry name" value="Glycogen [starch] synthase"/>
    <property type="match status" value="1"/>
</dbReference>
<dbReference type="FunFam" id="3.40.50.2000:FF:000028">
    <property type="entry name" value="Glycogen [starch] synthase"/>
    <property type="match status" value="1"/>
</dbReference>
<dbReference type="Gene3D" id="3.40.50.2000">
    <property type="entry name" value="Glycogen Phosphorylase B"/>
    <property type="match status" value="2"/>
</dbReference>
<dbReference type="InterPro" id="IPR008631">
    <property type="entry name" value="Glycogen_synth"/>
</dbReference>
<dbReference type="PANTHER" id="PTHR10176:SF2">
    <property type="entry name" value="GLYCOGEN [STARCH] SYNTHASE, MUSCLE"/>
    <property type="match status" value="1"/>
</dbReference>
<dbReference type="PANTHER" id="PTHR10176">
    <property type="entry name" value="GLYCOGEN SYNTHASE"/>
    <property type="match status" value="1"/>
</dbReference>
<dbReference type="Pfam" id="PF05693">
    <property type="entry name" value="Glycogen_syn"/>
    <property type="match status" value="1"/>
</dbReference>
<dbReference type="SUPFAM" id="SSF53756">
    <property type="entry name" value="UDP-Glycosyltransferase/glycogen phosphorylase"/>
    <property type="match status" value="2"/>
</dbReference>
<organism>
    <name type="scientific">Rattus norvegicus</name>
    <name type="common">Rat</name>
    <dbReference type="NCBI Taxonomy" id="10116"/>
    <lineage>
        <taxon>Eukaryota</taxon>
        <taxon>Metazoa</taxon>
        <taxon>Chordata</taxon>
        <taxon>Craniata</taxon>
        <taxon>Vertebrata</taxon>
        <taxon>Euteleostomi</taxon>
        <taxon>Mammalia</taxon>
        <taxon>Eutheria</taxon>
        <taxon>Euarchontoglires</taxon>
        <taxon>Glires</taxon>
        <taxon>Rodentia</taxon>
        <taxon>Myomorpha</taxon>
        <taxon>Muroidea</taxon>
        <taxon>Muridae</taxon>
        <taxon>Murinae</taxon>
        <taxon>Rattus</taxon>
    </lineage>
</organism>
<reference key="1">
    <citation type="journal article" date="2004" name="Genome Res.">
        <title>The status, quality, and expansion of the NIH full-length cDNA project: the Mammalian Gene Collection (MGC).</title>
        <authorList>
            <consortium name="The MGC Project Team"/>
        </authorList>
    </citation>
    <scope>NUCLEOTIDE SEQUENCE [LARGE SCALE MRNA]</scope>
    <source>
        <tissue>Kidney</tissue>
    </source>
</reference>
<reference key="2">
    <citation type="journal article" date="2012" name="Nat. Commun.">
        <title>Quantitative maps of protein phosphorylation sites across 14 different rat organs and tissues.</title>
        <authorList>
            <person name="Lundby A."/>
            <person name="Secher A."/>
            <person name="Lage K."/>
            <person name="Nordsborg N.B."/>
            <person name="Dmytriyev A."/>
            <person name="Lundby C."/>
            <person name="Olsen J.V."/>
        </authorList>
    </citation>
    <scope>PHOSPHORYLATION [LARGE SCALE ANALYSIS] AT SER-412; SER-641; SER-645; SER-652; SER-653; SER-657; SER-672 AND THR-722</scope>
    <scope>IDENTIFICATION BY MASS SPECTROMETRY [LARGE SCALE ANALYSIS]</scope>
</reference>
<keyword id="KW-0021">Allosteric enzyme</keyword>
<keyword id="KW-0320">Glycogen biosynthesis</keyword>
<keyword id="KW-0328">Glycosyltransferase</keyword>
<keyword id="KW-0597">Phosphoprotein</keyword>
<keyword id="KW-1185">Reference proteome</keyword>
<keyword id="KW-0808">Transferase</keyword>